<sequence>MGVPKRRTSKARKNKRRSIWGQMAAPTLVECPQCHQLKLNHRVCPKCGYYKGREAIQVAE</sequence>
<dbReference type="EMBL" id="CP000232">
    <property type="protein sequence ID" value="ABC19258.1"/>
    <property type="status" value="ALT_INIT"/>
    <property type="molecule type" value="Genomic_DNA"/>
</dbReference>
<dbReference type="RefSeq" id="YP_429801.1">
    <property type="nucleotide sequence ID" value="NC_007644.1"/>
</dbReference>
<dbReference type="SMR" id="Q2RJY1"/>
<dbReference type="STRING" id="264732.Moth_0942"/>
<dbReference type="EnsemblBacteria" id="ABC19258">
    <property type="protein sequence ID" value="ABC19258"/>
    <property type="gene ID" value="Moth_0942"/>
</dbReference>
<dbReference type="KEGG" id="mta:Moth_0942"/>
<dbReference type="PATRIC" id="fig|264732.11.peg.1014"/>
<dbReference type="eggNOG" id="COG0333">
    <property type="taxonomic scope" value="Bacteria"/>
</dbReference>
<dbReference type="HOGENOM" id="CLU_129084_3_1_9"/>
<dbReference type="OrthoDB" id="9812874at2"/>
<dbReference type="GO" id="GO:0015934">
    <property type="term" value="C:large ribosomal subunit"/>
    <property type="evidence" value="ECO:0007669"/>
    <property type="project" value="InterPro"/>
</dbReference>
<dbReference type="GO" id="GO:0003735">
    <property type="term" value="F:structural constituent of ribosome"/>
    <property type="evidence" value="ECO:0007669"/>
    <property type="project" value="InterPro"/>
</dbReference>
<dbReference type="GO" id="GO:0006412">
    <property type="term" value="P:translation"/>
    <property type="evidence" value="ECO:0007669"/>
    <property type="project" value="UniProtKB-UniRule"/>
</dbReference>
<dbReference type="HAMAP" id="MF_00340">
    <property type="entry name" value="Ribosomal_bL32"/>
    <property type="match status" value="1"/>
</dbReference>
<dbReference type="InterPro" id="IPR002677">
    <property type="entry name" value="Ribosomal_bL32"/>
</dbReference>
<dbReference type="InterPro" id="IPR044957">
    <property type="entry name" value="Ribosomal_bL32_bact"/>
</dbReference>
<dbReference type="InterPro" id="IPR011332">
    <property type="entry name" value="Ribosomal_zn-bd"/>
</dbReference>
<dbReference type="NCBIfam" id="TIGR01031">
    <property type="entry name" value="rpmF_bact"/>
    <property type="match status" value="1"/>
</dbReference>
<dbReference type="PANTHER" id="PTHR35534">
    <property type="entry name" value="50S RIBOSOMAL PROTEIN L32"/>
    <property type="match status" value="1"/>
</dbReference>
<dbReference type="PANTHER" id="PTHR35534:SF1">
    <property type="entry name" value="LARGE RIBOSOMAL SUBUNIT PROTEIN BL32"/>
    <property type="match status" value="1"/>
</dbReference>
<dbReference type="Pfam" id="PF01783">
    <property type="entry name" value="Ribosomal_L32p"/>
    <property type="match status" value="1"/>
</dbReference>
<dbReference type="SUPFAM" id="SSF57829">
    <property type="entry name" value="Zn-binding ribosomal proteins"/>
    <property type="match status" value="1"/>
</dbReference>
<reference key="1">
    <citation type="journal article" date="2008" name="Environ. Microbiol.">
        <title>The complete genome sequence of Moorella thermoacetica (f. Clostridium thermoaceticum).</title>
        <authorList>
            <person name="Pierce E."/>
            <person name="Xie G."/>
            <person name="Barabote R.D."/>
            <person name="Saunders E."/>
            <person name="Han C.S."/>
            <person name="Detter J.C."/>
            <person name="Richardson P."/>
            <person name="Brettin T.S."/>
            <person name="Das A."/>
            <person name="Ljungdahl L.G."/>
            <person name="Ragsdale S.W."/>
        </authorList>
    </citation>
    <scope>NUCLEOTIDE SEQUENCE [LARGE SCALE GENOMIC DNA]</scope>
    <source>
        <strain>ATCC 39073 / JCM 9320</strain>
    </source>
</reference>
<gene>
    <name evidence="1" type="primary">rpmF</name>
    <name type="ordered locus">Moth_0942</name>
</gene>
<accession>Q2RJY1</accession>
<organism>
    <name type="scientific">Moorella thermoacetica (strain ATCC 39073 / JCM 9320)</name>
    <dbReference type="NCBI Taxonomy" id="264732"/>
    <lineage>
        <taxon>Bacteria</taxon>
        <taxon>Bacillati</taxon>
        <taxon>Bacillota</taxon>
        <taxon>Clostridia</taxon>
        <taxon>Moorellales</taxon>
        <taxon>Moorellaceae</taxon>
        <taxon>Moorella</taxon>
    </lineage>
</organism>
<keyword id="KW-0687">Ribonucleoprotein</keyword>
<keyword id="KW-0689">Ribosomal protein</keyword>
<feature type="chain" id="PRO_0000296502" description="Large ribosomal subunit protein bL32">
    <location>
        <begin position="1"/>
        <end position="60"/>
    </location>
</feature>
<protein>
    <recommendedName>
        <fullName evidence="1">Large ribosomal subunit protein bL32</fullName>
    </recommendedName>
    <alternativeName>
        <fullName evidence="2">50S ribosomal protein L32</fullName>
    </alternativeName>
</protein>
<proteinExistence type="inferred from homology"/>
<comment type="similarity">
    <text evidence="1">Belongs to the bacterial ribosomal protein bL32 family.</text>
</comment>
<comment type="sequence caution" evidence="2">
    <conflict type="erroneous initiation">
        <sequence resource="EMBL-CDS" id="ABC19258"/>
    </conflict>
</comment>
<evidence type="ECO:0000255" key="1">
    <source>
        <dbReference type="HAMAP-Rule" id="MF_00340"/>
    </source>
</evidence>
<evidence type="ECO:0000305" key="2"/>
<name>RL32_MOOTA</name>